<comment type="function">
    <text evidence="1">One of the components of the core complex of photosystem II (PSII). PSII is a light-driven water:plastoquinone oxidoreductase that uses light energy to abstract electrons from H(2)O, generating O(2) and a proton gradient subsequently used for ATP formation. It consists of a core antenna complex that captures photons, and an electron transfer chain that converts photonic excitation into a charge separation. This subunit is found at the monomer-monomer interface and is required for correct PSII assembly and/or dimerization.</text>
</comment>
<comment type="subunit">
    <text evidence="1">PSII is composed of 1 copy each of membrane proteins PsbA, PsbB, PsbC, PsbD, PsbE, PsbF, PsbH, PsbI, PsbJ, PsbK, PsbL, PsbM, PsbT, PsbX, PsbY, PsbZ, Psb30/Ycf12, at least 3 peripheral proteins of the oxygen-evolving complex and a large number of cofactors. It forms dimeric complexes.</text>
</comment>
<comment type="subcellular location">
    <subcellularLocation>
        <location evidence="1">Plastid</location>
        <location evidence="1">Chloroplast thylakoid membrane</location>
        <topology evidence="1">Single-pass membrane protein</topology>
    </subcellularLocation>
</comment>
<comment type="similarity">
    <text evidence="1">Belongs to the PsbL family.</text>
</comment>
<keyword id="KW-0150">Chloroplast</keyword>
<keyword id="KW-0472">Membrane</keyword>
<keyword id="KW-0602">Photosynthesis</keyword>
<keyword id="KW-0604">Photosystem II</keyword>
<keyword id="KW-0934">Plastid</keyword>
<keyword id="KW-0674">Reaction center</keyword>
<keyword id="KW-0793">Thylakoid</keyword>
<keyword id="KW-0812">Transmembrane</keyword>
<keyword id="KW-1133">Transmembrane helix</keyword>
<geneLocation type="chloroplast"/>
<protein>
    <recommendedName>
        <fullName evidence="1">Photosystem II reaction center protein L</fullName>
        <shortName evidence="1">PSII-L</shortName>
    </recommendedName>
</protein>
<feature type="chain" id="PRO_0000353260" description="Photosystem II reaction center protein L">
    <location>
        <begin position="1"/>
        <end position="38"/>
    </location>
</feature>
<feature type="transmembrane region" description="Helical" evidence="1">
    <location>
        <begin position="17"/>
        <end position="37"/>
    </location>
</feature>
<sequence length="38" mass="4497">MTQSNPNEQNVELNRTSLYWGLLLIFVLAVLFSNYFFN</sequence>
<reference key="1">
    <citation type="journal article" date="2008" name="J. Mol. Evol.">
        <title>Complete sequence of the Duckweed (Lemna minor) chloroplast genome: structural organization and phylogenetic relationships to other angiosperms.</title>
        <authorList>
            <person name="Mardanov A.V."/>
            <person name="Ravin N.V."/>
            <person name="Kuznetsov B.B."/>
            <person name="Samigullin T.H."/>
            <person name="Antonov A.S."/>
            <person name="Kolganova T.V."/>
            <person name="Skyabin K.G."/>
        </authorList>
    </citation>
    <scope>NUCLEOTIDE SEQUENCE [LARGE SCALE GENOMIC DNA]</scope>
</reference>
<dbReference type="EMBL" id="DQ400350">
    <property type="protein sequence ID" value="ABD48510.1"/>
    <property type="molecule type" value="Genomic_DNA"/>
</dbReference>
<dbReference type="RefSeq" id="YP_001595523.1">
    <property type="nucleotide sequence ID" value="NC_010109.1"/>
</dbReference>
<dbReference type="SMR" id="A9L9B1"/>
<dbReference type="GeneID" id="5787613"/>
<dbReference type="GO" id="GO:0009535">
    <property type="term" value="C:chloroplast thylakoid membrane"/>
    <property type="evidence" value="ECO:0007669"/>
    <property type="project" value="UniProtKB-SubCell"/>
</dbReference>
<dbReference type="GO" id="GO:0009539">
    <property type="term" value="C:photosystem II reaction center"/>
    <property type="evidence" value="ECO:0007669"/>
    <property type="project" value="InterPro"/>
</dbReference>
<dbReference type="GO" id="GO:0015979">
    <property type="term" value="P:photosynthesis"/>
    <property type="evidence" value="ECO:0007669"/>
    <property type="project" value="UniProtKB-UniRule"/>
</dbReference>
<dbReference type="HAMAP" id="MF_01317">
    <property type="entry name" value="PSII_PsbL"/>
    <property type="match status" value="1"/>
</dbReference>
<dbReference type="InterPro" id="IPR003372">
    <property type="entry name" value="PSII_PsbL"/>
</dbReference>
<dbReference type="InterPro" id="IPR037266">
    <property type="entry name" value="PSII_PsbL_sf"/>
</dbReference>
<dbReference type="NCBIfam" id="NF001972">
    <property type="entry name" value="PRK00753.1"/>
    <property type="match status" value="1"/>
</dbReference>
<dbReference type="Pfam" id="PF02419">
    <property type="entry name" value="PsbL"/>
    <property type="match status" value="1"/>
</dbReference>
<dbReference type="SUPFAM" id="SSF161017">
    <property type="entry name" value="Photosystem II reaction center protein L, PsbL"/>
    <property type="match status" value="1"/>
</dbReference>
<proteinExistence type="inferred from homology"/>
<accession>A9L9B1</accession>
<gene>
    <name evidence="1" type="primary">psbL</name>
</gene>
<name>PSBL_LEMMI</name>
<evidence type="ECO:0000255" key="1">
    <source>
        <dbReference type="HAMAP-Rule" id="MF_01317"/>
    </source>
</evidence>
<organism>
    <name type="scientific">Lemna minor</name>
    <name type="common">Common duckweed</name>
    <dbReference type="NCBI Taxonomy" id="4472"/>
    <lineage>
        <taxon>Eukaryota</taxon>
        <taxon>Viridiplantae</taxon>
        <taxon>Streptophyta</taxon>
        <taxon>Embryophyta</taxon>
        <taxon>Tracheophyta</taxon>
        <taxon>Spermatophyta</taxon>
        <taxon>Magnoliopsida</taxon>
        <taxon>Liliopsida</taxon>
        <taxon>Araceae</taxon>
        <taxon>Lemnoideae</taxon>
        <taxon>Lemna</taxon>
    </lineage>
</organism>